<organism>
    <name type="scientific">Flavobacterium johnsoniae (strain ATCC 17061 / DSM 2064 / JCM 8514 / BCRC 14874 / CCUG 350202 / NBRC 14942 / NCIMB 11054 / UW101)</name>
    <name type="common">Cytophaga johnsonae</name>
    <dbReference type="NCBI Taxonomy" id="376686"/>
    <lineage>
        <taxon>Bacteria</taxon>
        <taxon>Pseudomonadati</taxon>
        <taxon>Bacteroidota</taxon>
        <taxon>Flavobacteriia</taxon>
        <taxon>Flavobacteriales</taxon>
        <taxon>Flavobacteriaceae</taxon>
        <taxon>Flavobacterium</taxon>
    </lineage>
</organism>
<feature type="signal peptide" evidence="1">
    <location>
        <begin position="1"/>
        <end position="18"/>
    </location>
</feature>
<feature type="chain" id="PRO_0000277812" description="Gliding motility lipoprotein GldH">
    <location>
        <begin position="19"/>
        <end position="159"/>
    </location>
</feature>
<feature type="lipid moiety-binding region" description="N-palmitoyl cysteine" evidence="1 2">
    <location>
        <position position="19"/>
    </location>
</feature>
<feature type="lipid moiety-binding region" description="S-diacylglycerol cysteine" evidence="1 2">
    <location>
        <position position="19"/>
    </location>
</feature>
<evidence type="ECO:0000255" key="1">
    <source>
        <dbReference type="PROSITE-ProRule" id="PRU00303"/>
    </source>
</evidence>
<evidence type="ECO:0000269" key="2">
    <source>
    </source>
</evidence>
<protein>
    <recommendedName>
        <fullName>Gliding motility lipoprotein GldH</fullName>
    </recommendedName>
</protein>
<accession>Q8KRP0</accession>
<accession>A5FLJ9</accession>
<keyword id="KW-1003">Cell membrane</keyword>
<keyword id="KW-0449">Lipoprotein</keyword>
<keyword id="KW-0472">Membrane</keyword>
<keyword id="KW-0564">Palmitate</keyword>
<keyword id="KW-0732">Signal</keyword>
<comment type="function">
    <text evidence="2">Required for gliding motility and chitin utilization.</text>
</comment>
<comment type="subcellular location">
    <subcellularLocation>
        <location evidence="1 2">Cell membrane</location>
        <topology evidence="1 2">Lipid-anchor</topology>
    </subcellularLocation>
</comment>
<comment type="disruption phenotype">
    <text evidence="2">Cells form nonspreading colonies, cannot digest chitin and are resistant to bacteriophages. Whereas wild-type cells can bind latex spheres and propel them along their surface, cells of the gldH mutant fail to do it.</text>
</comment>
<dbReference type="EMBL" id="AF527791">
    <property type="protein sequence ID" value="AAM92019.1"/>
    <property type="molecule type" value="Genomic_DNA"/>
</dbReference>
<dbReference type="EMBL" id="CP000685">
    <property type="protein sequence ID" value="ABQ03924.1"/>
    <property type="molecule type" value="Genomic_DNA"/>
</dbReference>
<dbReference type="RefSeq" id="WP_012022977.1">
    <property type="nucleotide sequence ID" value="NZ_MUGZ01000025.1"/>
</dbReference>
<dbReference type="STRING" id="376686.Fjoh_0890"/>
<dbReference type="TCDB" id="2.A.130.1.2">
    <property type="family name" value="the type 9 secretory system (t9ss) family"/>
</dbReference>
<dbReference type="KEGG" id="fjo:Fjoh_0890"/>
<dbReference type="eggNOG" id="ENOG50313I2">
    <property type="taxonomic scope" value="Bacteria"/>
</dbReference>
<dbReference type="HOGENOM" id="CLU_109250_2_0_10"/>
<dbReference type="OrthoDB" id="982482at2"/>
<dbReference type="Proteomes" id="UP000006694">
    <property type="component" value="Chromosome"/>
</dbReference>
<dbReference type="GO" id="GO:0005886">
    <property type="term" value="C:plasma membrane"/>
    <property type="evidence" value="ECO:0007669"/>
    <property type="project" value="UniProtKB-SubCell"/>
</dbReference>
<dbReference type="GO" id="GO:0071976">
    <property type="term" value="P:cell gliding"/>
    <property type="evidence" value="ECO:0000315"/>
    <property type="project" value="CACAO"/>
</dbReference>
<dbReference type="GO" id="GO:0006032">
    <property type="term" value="P:chitin catabolic process"/>
    <property type="evidence" value="ECO:0000315"/>
    <property type="project" value="CACAO"/>
</dbReference>
<dbReference type="InterPro" id="IPR020018">
    <property type="entry name" value="Motility-assoc_lipoprot_GldH"/>
</dbReference>
<dbReference type="NCBIfam" id="TIGR03511">
    <property type="entry name" value="GldH_lipo"/>
    <property type="match status" value="1"/>
</dbReference>
<dbReference type="Pfam" id="PF14109">
    <property type="entry name" value="GldH_lipo"/>
    <property type="match status" value="1"/>
</dbReference>
<dbReference type="PROSITE" id="PS51257">
    <property type="entry name" value="PROKAR_LIPOPROTEIN"/>
    <property type="match status" value="1"/>
</dbReference>
<proteinExistence type="evidence at protein level"/>
<sequence>MRIKNSGILLLAAILLFSCDKKRVFDEYKSVGSAWHKDSVVTFDLPVLDSTKKYNLFVNLRDNNNYPFNNLFLIVAIETPSGFTKVDTLEYQMANPDGTLMGNGFTDIKESKLYYKEDVKFKGKYKVHIKQAVRESGKIPGVEALEGITDVGFRIEQKD</sequence>
<reference key="1">
    <citation type="journal article" date="2003" name="J. Bacteriol.">
        <title>Flavobacterium johnsoniae GldH is a lipoprotein that is required for gliding motility and chitin utilization.</title>
        <authorList>
            <person name="McBride M.J."/>
            <person name="Braun T.F."/>
            <person name="Brust J.L."/>
        </authorList>
    </citation>
    <scope>NUCLEOTIDE SEQUENCE [GENOMIC DNA]</scope>
    <scope>FUNCTION</scope>
    <scope>SUBCELLULAR LOCATION</scope>
    <scope>DIACYLGLYCEROL AT CYS-19</scope>
    <scope>PALMITOYLATION AT CYS-19</scope>
    <scope>DISRUPTION PHENOTYPE</scope>
</reference>
<reference key="2">
    <citation type="journal article" date="2009" name="Appl. Environ. Microbiol.">
        <title>Novel features of the polysaccharide-digesting gliding bacterium Flavobacterium johnsoniae as revealed by genome sequence analysis.</title>
        <authorList>
            <person name="McBride M.J."/>
            <person name="Xie G."/>
            <person name="Martens E.C."/>
            <person name="Lapidus A."/>
            <person name="Henrissat B."/>
            <person name="Rhodes R.G."/>
            <person name="Goltsman E."/>
            <person name="Wang W."/>
            <person name="Xu J."/>
            <person name="Hunnicutt D.W."/>
            <person name="Staroscik A.M."/>
            <person name="Hoover T.R."/>
            <person name="Cheng Y.Q."/>
            <person name="Stein J.L."/>
        </authorList>
    </citation>
    <scope>NUCLEOTIDE SEQUENCE [LARGE SCALE GENOMIC DNA]</scope>
    <source>
        <strain>ATCC 17061 / DSM 2064 / JCM 8514 / BCRC 14874 / CCUG 350202 / NBRC 14942 / NCIMB 11054 / UW101</strain>
    </source>
</reference>
<name>GLDH_FLAJ1</name>
<gene>
    <name type="primary">gldH</name>
    <name type="ordered locus">Fjoh_0890</name>
</gene>